<dbReference type="EMBL" id="AF100203">
    <property type="protein sequence ID" value="AAC72401.1"/>
    <property type="molecule type" value="Genomic_DNA"/>
</dbReference>
<dbReference type="EMBL" id="AF084226">
    <property type="protein sequence ID" value="AAD52038.1"/>
    <property type="molecule type" value="mRNA"/>
</dbReference>
<dbReference type="EMBL" id="AF084227">
    <property type="protein sequence ID" value="AAD52039.1"/>
    <property type="molecule type" value="mRNA"/>
</dbReference>
<dbReference type="RefSeq" id="NP_001036112.1">
    <property type="nucleotide sequence ID" value="NM_001042647.1"/>
</dbReference>
<dbReference type="SMR" id="O97663"/>
<dbReference type="FunCoup" id="O97663">
    <property type="interactions" value="320"/>
</dbReference>
<dbReference type="STRING" id="9544.ENSMMUP00000012486"/>
<dbReference type="PaxDb" id="9544-ENSMMUP00000012486"/>
<dbReference type="Ensembl" id="ENSMMUT00000013326.4">
    <property type="protein sequence ID" value="ENSMMUP00000012486.2"/>
    <property type="gene ID" value="ENSMMUG00000009550.4"/>
</dbReference>
<dbReference type="GeneID" id="698718"/>
<dbReference type="KEGG" id="mcc:698718"/>
<dbReference type="CTD" id="2838"/>
<dbReference type="VEuPathDB" id="HostDB:ENSMMUG00000009550"/>
<dbReference type="VGNC" id="VGNC:73125">
    <property type="gene designation" value="GPR15"/>
</dbReference>
<dbReference type="eggNOG" id="ENOG502RCE3">
    <property type="taxonomic scope" value="Eukaryota"/>
</dbReference>
<dbReference type="GeneTree" id="ENSGT01130000278303"/>
<dbReference type="HOGENOM" id="CLU_009579_8_1_1"/>
<dbReference type="InParanoid" id="O97663"/>
<dbReference type="OMA" id="LTFYCSI"/>
<dbReference type="OrthoDB" id="10037617at2759"/>
<dbReference type="TreeFam" id="TF330024"/>
<dbReference type="Proteomes" id="UP000006718">
    <property type="component" value="Chromosome 2"/>
</dbReference>
<dbReference type="Bgee" id="ENSMMUG00000009550">
    <property type="expression patterns" value="Expressed in colon and 3 other cell types or tissues"/>
</dbReference>
<dbReference type="ExpressionAtlas" id="O97663">
    <property type="expression patterns" value="baseline"/>
</dbReference>
<dbReference type="GO" id="GO:0005768">
    <property type="term" value="C:endosome"/>
    <property type="evidence" value="ECO:0007669"/>
    <property type="project" value="Ensembl"/>
</dbReference>
<dbReference type="GO" id="GO:0005886">
    <property type="term" value="C:plasma membrane"/>
    <property type="evidence" value="ECO:0000250"/>
    <property type="project" value="UniProtKB"/>
</dbReference>
<dbReference type="GO" id="GO:0015026">
    <property type="term" value="F:coreceptor activity"/>
    <property type="evidence" value="ECO:0007669"/>
    <property type="project" value="Ensembl"/>
</dbReference>
<dbReference type="GO" id="GO:0004930">
    <property type="term" value="F:G protein-coupled receptor activity"/>
    <property type="evidence" value="ECO:0000318"/>
    <property type="project" value="GO_Central"/>
</dbReference>
<dbReference type="GO" id="GO:0001618">
    <property type="term" value="F:virus receptor activity"/>
    <property type="evidence" value="ECO:0007669"/>
    <property type="project" value="Ensembl"/>
</dbReference>
<dbReference type="GO" id="GO:0001525">
    <property type="term" value="P:angiogenesis"/>
    <property type="evidence" value="ECO:0000250"/>
    <property type="project" value="UniProtKB"/>
</dbReference>
<dbReference type="GO" id="GO:0007186">
    <property type="term" value="P:G protein-coupled receptor signaling pathway"/>
    <property type="evidence" value="ECO:0000250"/>
    <property type="project" value="UniProtKB"/>
</dbReference>
<dbReference type="GO" id="GO:0072678">
    <property type="term" value="P:T cell migration"/>
    <property type="evidence" value="ECO:0007669"/>
    <property type="project" value="Ensembl"/>
</dbReference>
<dbReference type="FunFam" id="1.20.1070.10:FF:000187">
    <property type="entry name" value="G-protein coupled receptor 15"/>
    <property type="match status" value="1"/>
</dbReference>
<dbReference type="Gene3D" id="1.20.1070.10">
    <property type="entry name" value="Rhodopsin 7-helix transmembrane proteins"/>
    <property type="match status" value="1"/>
</dbReference>
<dbReference type="InterPro" id="IPR050119">
    <property type="entry name" value="CCR1-9-like"/>
</dbReference>
<dbReference type="InterPro" id="IPR000276">
    <property type="entry name" value="GPCR_Rhodpsn"/>
</dbReference>
<dbReference type="InterPro" id="IPR017452">
    <property type="entry name" value="GPCR_Rhodpsn_7TM"/>
</dbReference>
<dbReference type="PANTHER" id="PTHR10489">
    <property type="entry name" value="CELL ADHESION MOLECULE"/>
    <property type="match status" value="1"/>
</dbReference>
<dbReference type="PANTHER" id="PTHR10489:SF954">
    <property type="entry name" value="G PROTEIN-COUPLED RECEPTOR 25"/>
    <property type="match status" value="1"/>
</dbReference>
<dbReference type="Pfam" id="PF00001">
    <property type="entry name" value="7tm_1"/>
    <property type="match status" value="1"/>
</dbReference>
<dbReference type="PRINTS" id="PR00237">
    <property type="entry name" value="GPCRRHODOPSN"/>
</dbReference>
<dbReference type="PRINTS" id="PR01157">
    <property type="entry name" value="P2YPURNOCPTR"/>
</dbReference>
<dbReference type="SMART" id="SM01381">
    <property type="entry name" value="7TM_GPCR_Srsx"/>
    <property type="match status" value="1"/>
</dbReference>
<dbReference type="SUPFAM" id="SSF81321">
    <property type="entry name" value="Family A G protein-coupled receptor-like"/>
    <property type="match status" value="1"/>
</dbReference>
<dbReference type="PROSITE" id="PS00237">
    <property type="entry name" value="G_PROTEIN_RECEP_F1_1"/>
    <property type="match status" value="1"/>
</dbReference>
<dbReference type="PROSITE" id="PS50262">
    <property type="entry name" value="G_PROTEIN_RECEP_F1_2"/>
    <property type="match status" value="1"/>
</dbReference>
<comment type="function">
    <text evidence="1 2">G protein-coupled receptor that plays an important role in immune homeostasis. Acts via its natural ligand GPR15LG, a chemokine-like polypeptide strongly expressed in gastrointestinal tissues. GPR15-GPR15LG signaling axis regulates intestinal homeostasis and inflammation through the migration of immune cells (By similarity). Controls thereby the specific homing of T-cells, particularly FOXP3+ regulatory T-cells (Tregs), to the large intestine lamina propria (By similarity). Also required for skin localization of thymus-derived dendritic epidermal T-cells (By similarity). Plays an important role in mediating cytoprotective function as well as angiogenesis of thrombomodulin (By similarity). Mechanistically, preferentially signals through the Gi/o pathway to inhibit adenylate cyclase activity and activate a phosphatidylinositol-calcium second messenger system that regulates the release of Ca(2+) ions from intracellular stores (By similarity).</text>
</comment>
<comment type="subunit">
    <text evidence="1">Interacts with adapter YWHAE; this interaction promotes ER-to-Golgi transport of GPR15.</text>
</comment>
<comment type="subcellular location">
    <subcellularLocation>
        <location evidence="1">Cell membrane</location>
        <topology evidence="1">Multi-pass membrane protein</topology>
    </subcellularLocation>
</comment>
<comment type="PTM">
    <text evidence="1">Phosphorylation is necessary for YWHAE binding and efficient surface expression.</text>
</comment>
<comment type="PTM">
    <text evidence="1">O-glycosylated. Sialylated O-glycans in the N-terminal tail inhibits binding of GPR15LG.</text>
</comment>
<comment type="PTM">
    <text evidence="1">Sulfation is required for efficient binding of GPR15LG.</text>
</comment>
<comment type="similarity">
    <text evidence="4">Belongs to the G-protein coupled receptor 1 family.</text>
</comment>
<organism>
    <name type="scientific">Macaca mulatta</name>
    <name type="common">Rhesus macaque</name>
    <dbReference type="NCBI Taxonomy" id="9544"/>
    <lineage>
        <taxon>Eukaryota</taxon>
        <taxon>Metazoa</taxon>
        <taxon>Chordata</taxon>
        <taxon>Craniata</taxon>
        <taxon>Vertebrata</taxon>
        <taxon>Euteleostomi</taxon>
        <taxon>Mammalia</taxon>
        <taxon>Eutheria</taxon>
        <taxon>Euarchontoglires</taxon>
        <taxon>Primates</taxon>
        <taxon>Haplorrhini</taxon>
        <taxon>Catarrhini</taxon>
        <taxon>Cercopithecidae</taxon>
        <taxon>Cercopithecinae</taxon>
        <taxon>Macaca</taxon>
    </lineage>
</organism>
<feature type="chain" id="PRO_0000069533" description="G-protein coupled receptor 15">
    <location>
        <begin position="1"/>
        <end position="360"/>
    </location>
</feature>
<feature type="topological domain" description="Extracellular" evidence="3">
    <location>
        <begin position="1"/>
        <end position="33"/>
    </location>
</feature>
<feature type="transmembrane region" description="Helical; Name=1" evidence="3">
    <location>
        <begin position="34"/>
        <end position="54"/>
    </location>
</feature>
<feature type="topological domain" description="Cytoplasmic" evidence="3">
    <location>
        <begin position="55"/>
        <end position="69"/>
    </location>
</feature>
<feature type="transmembrane region" description="Helical; Name=2" evidence="3">
    <location>
        <begin position="70"/>
        <end position="90"/>
    </location>
</feature>
<feature type="topological domain" description="Extracellular" evidence="3">
    <location>
        <begin position="91"/>
        <end position="120"/>
    </location>
</feature>
<feature type="transmembrane region" description="Helical; Name=3" evidence="3">
    <location>
        <begin position="121"/>
        <end position="141"/>
    </location>
</feature>
<feature type="topological domain" description="Cytoplasmic" evidence="3">
    <location>
        <begin position="142"/>
        <end position="149"/>
    </location>
</feature>
<feature type="transmembrane region" description="Helical; Name=4" evidence="3">
    <location>
        <begin position="150"/>
        <end position="170"/>
    </location>
</feature>
<feature type="topological domain" description="Extracellular" evidence="3">
    <location>
        <begin position="171"/>
        <end position="192"/>
    </location>
</feature>
<feature type="transmembrane region" description="Helical; Name=5" evidence="3">
    <location>
        <begin position="193"/>
        <end position="213"/>
    </location>
</feature>
<feature type="topological domain" description="Cytoplasmic" evidence="3">
    <location>
        <begin position="214"/>
        <end position="239"/>
    </location>
</feature>
<feature type="transmembrane region" description="Helical; Name=6" evidence="3">
    <location>
        <begin position="240"/>
        <end position="260"/>
    </location>
</feature>
<feature type="topological domain" description="Extracellular" evidence="3">
    <location>
        <begin position="261"/>
        <end position="284"/>
    </location>
</feature>
<feature type="transmembrane region" description="Helical; Name=7" evidence="3">
    <location>
        <begin position="285"/>
        <end position="305"/>
    </location>
</feature>
<feature type="topological domain" description="Cytoplasmic" evidence="3">
    <location>
        <begin position="306"/>
        <end position="360"/>
    </location>
</feature>
<feature type="modified residue" description="Phosphoserine" evidence="1">
    <location>
        <position position="359"/>
    </location>
</feature>
<feature type="sequence variant" evidence="5">
    <original>H</original>
    <variation>R</variation>
    <location>
        <position position="28"/>
    </location>
</feature>
<evidence type="ECO:0000250" key="1">
    <source>
        <dbReference type="UniProtKB" id="P49685"/>
    </source>
</evidence>
<evidence type="ECO:0000250" key="2">
    <source>
        <dbReference type="UniProtKB" id="Q0VDU3"/>
    </source>
</evidence>
<evidence type="ECO:0000255" key="3"/>
<evidence type="ECO:0000255" key="4">
    <source>
        <dbReference type="PROSITE-ProRule" id="PRU00521"/>
    </source>
</evidence>
<evidence type="ECO:0000269" key="5">
    <source>
    </source>
</evidence>
<gene>
    <name type="primary">GPR15</name>
</gene>
<accession>O97663</accession>
<accession>Q9TV17</accession>
<sequence length="360" mass="40787">MDPEETSVYLDYYYATSPNPDIRETHSHVPYTSVFLPVFYTAVFLTGVLGNLVLMGALHFKPGSRRLIDIFIINLAASDFIFLVTLPLWVDKEASLGLWRTGSFLCKGSSYMISVNMHCSVFLLTCMSVDRYLAIVCPVVSRKFRRTDCAYVVCASIWFISCLLGLPTLLSRELTLIDDKPYCAEKKATPLKLIWSLVALIFTFFVPLLSIVTCYCCIARKLCAHYQQSGKHNKKLKKSIKIIFIVVAAFLVSWLPFNTFKLLAIVSGLQQERYFPSAMLQLGMEVSGPLAFANSCVNPFIYYIFDSYIRRAIVHCLCPCLKNYDFGSSTETSDSHLTKALSTFIHAEDFTRRRKRSVSL</sequence>
<name>GPR15_MACMU</name>
<keyword id="KW-1003">Cell membrane</keyword>
<keyword id="KW-0297">G-protein coupled receptor</keyword>
<keyword id="KW-0472">Membrane</keyword>
<keyword id="KW-0597">Phosphoprotein</keyword>
<keyword id="KW-0675">Receptor</keyword>
<keyword id="KW-1185">Reference proteome</keyword>
<keyword id="KW-0807">Transducer</keyword>
<keyword id="KW-0812">Transmembrane</keyword>
<keyword id="KW-1133">Transmembrane helix</keyword>
<reference key="1">
    <citation type="journal article" date="2001" name="AIDS Res. Hum. Retroviruses">
        <title>Identification and comparison of eleven rhesus macaque chemokine receptors.</title>
        <authorList>
            <person name="Margulies B.J."/>
            <person name="Hauer D.A."/>
            <person name="Clements J.E."/>
        </authorList>
    </citation>
    <scope>NUCLEOTIDE SEQUENCE [GENOMIC DNA]</scope>
    <source>
        <tissue>Spleen</tissue>
    </source>
</reference>
<reference key="2">
    <citation type="journal article" date="1999" name="AIDS Res. Hum. Retroviruses">
        <title>Two alleles for rhesus macaque GPR15.</title>
        <authorList>
            <person name="Pretet J.-L."/>
            <person name="Brussel A."/>
            <person name="Guillet J.-G."/>
            <person name="Butor C."/>
        </authorList>
    </citation>
    <scope>NUCLEOTIDE SEQUENCE [MRNA]</scope>
    <scope>VARIANT ARG-28</scope>
</reference>
<proteinExistence type="evidence at transcript level"/>
<protein>
    <recommendedName>
        <fullName>G-protein coupled receptor 15</fullName>
    </recommendedName>
</protein>